<comment type="function">
    <text evidence="1">Catalyzes the transfer of the phosphoribosyl group of 5-phosphorylribose-1-pyrophosphate (PRPP) to anthranilate to yield N-(5'-phosphoribosyl)-anthranilate (PRA).</text>
</comment>
<comment type="catalytic activity">
    <reaction evidence="1">
        <text>N-(5-phospho-beta-D-ribosyl)anthranilate + diphosphate = 5-phospho-alpha-D-ribose 1-diphosphate + anthranilate</text>
        <dbReference type="Rhea" id="RHEA:11768"/>
        <dbReference type="ChEBI" id="CHEBI:16567"/>
        <dbReference type="ChEBI" id="CHEBI:18277"/>
        <dbReference type="ChEBI" id="CHEBI:33019"/>
        <dbReference type="ChEBI" id="CHEBI:58017"/>
        <dbReference type="EC" id="2.4.2.18"/>
    </reaction>
</comment>
<comment type="cofactor">
    <cofactor evidence="1">
        <name>Mg(2+)</name>
        <dbReference type="ChEBI" id="CHEBI:18420"/>
    </cofactor>
    <text evidence="1">Binds 2 magnesium ions per monomer.</text>
</comment>
<comment type="pathway">
    <text evidence="1">Amino-acid biosynthesis; L-tryptophan biosynthesis; L-tryptophan from chorismate: step 2/5.</text>
</comment>
<comment type="subunit">
    <text evidence="1">Homodimer.</text>
</comment>
<comment type="similarity">
    <text evidence="1">Belongs to the anthranilate phosphoribosyltransferase family.</text>
</comment>
<dbReference type="EC" id="2.4.2.18" evidence="1"/>
<dbReference type="EMBL" id="CP000088">
    <property type="protein sequence ID" value="AAZ55062.1"/>
    <property type="molecule type" value="Genomic_DNA"/>
</dbReference>
<dbReference type="RefSeq" id="WP_011291471.1">
    <property type="nucleotide sequence ID" value="NC_007333.1"/>
</dbReference>
<dbReference type="SMR" id="Q47R55"/>
<dbReference type="STRING" id="269800.Tfu_1024"/>
<dbReference type="KEGG" id="tfu:Tfu_1024"/>
<dbReference type="eggNOG" id="COG0547">
    <property type="taxonomic scope" value="Bacteria"/>
</dbReference>
<dbReference type="HOGENOM" id="CLU_034315_4_1_11"/>
<dbReference type="OrthoDB" id="9806430at2"/>
<dbReference type="UniPathway" id="UPA00035">
    <property type="reaction ID" value="UER00041"/>
</dbReference>
<dbReference type="GO" id="GO:0005829">
    <property type="term" value="C:cytosol"/>
    <property type="evidence" value="ECO:0007669"/>
    <property type="project" value="TreeGrafter"/>
</dbReference>
<dbReference type="GO" id="GO:0004048">
    <property type="term" value="F:anthranilate phosphoribosyltransferase activity"/>
    <property type="evidence" value="ECO:0007669"/>
    <property type="project" value="UniProtKB-UniRule"/>
</dbReference>
<dbReference type="GO" id="GO:0000287">
    <property type="term" value="F:magnesium ion binding"/>
    <property type="evidence" value="ECO:0007669"/>
    <property type="project" value="UniProtKB-UniRule"/>
</dbReference>
<dbReference type="GO" id="GO:0000162">
    <property type="term" value="P:L-tryptophan biosynthetic process"/>
    <property type="evidence" value="ECO:0007669"/>
    <property type="project" value="UniProtKB-UniRule"/>
</dbReference>
<dbReference type="FunFam" id="3.40.1030.10:FF:000002">
    <property type="entry name" value="Anthranilate phosphoribosyltransferase"/>
    <property type="match status" value="1"/>
</dbReference>
<dbReference type="Gene3D" id="3.40.1030.10">
    <property type="entry name" value="Nucleoside phosphorylase/phosphoribosyltransferase catalytic domain"/>
    <property type="match status" value="1"/>
</dbReference>
<dbReference type="Gene3D" id="1.20.970.10">
    <property type="entry name" value="Transferase, Pyrimidine Nucleoside Phosphorylase, Chain C"/>
    <property type="match status" value="1"/>
</dbReference>
<dbReference type="HAMAP" id="MF_00211">
    <property type="entry name" value="TrpD"/>
    <property type="match status" value="1"/>
</dbReference>
<dbReference type="InterPro" id="IPR005940">
    <property type="entry name" value="Anthranilate_Pribosyl_Tfrase"/>
</dbReference>
<dbReference type="InterPro" id="IPR000312">
    <property type="entry name" value="Glycosyl_Trfase_fam3"/>
</dbReference>
<dbReference type="InterPro" id="IPR017459">
    <property type="entry name" value="Glycosyl_Trfase_fam3_N_dom"/>
</dbReference>
<dbReference type="InterPro" id="IPR036320">
    <property type="entry name" value="Glycosyl_Trfase_fam3_N_dom_sf"/>
</dbReference>
<dbReference type="InterPro" id="IPR035902">
    <property type="entry name" value="Nuc_phospho_transferase"/>
</dbReference>
<dbReference type="NCBIfam" id="TIGR01245">
    <property type="entry name" value="trpD"/>
    <property type="match status" value="1"/>
</dbReference>
<dbReference type="PANTHER" id="PTHR43285">
    <property type="entry name" value="ANTHRANILATE PHOSPHORIBOSYLTRANSFERASE"/>
    <property type="match status" value="1"/>
</dbReference>
<dbReference type="PANTHER" id="PTHR43285:SF2">
    <property type="entry name" value="ANTHRANILATE PHOSPHORIBOSYLTRANSFERASE"/>
    <property type="match status" value="1"/>
</dbReference>
<dbReference type="Pfam" id="PF02885">
    <property type="entry name" value="Glycos_trans_3N"/>
    <property type="match status" value="1"/>
</dbReference>
<dbReference type="Pfam" id="PF00591">
    <property type="entry name" value="Glycos_transf_3"/>
    <property type="match status" value="1"/>
</dbReference>
<dbReference type="SUPFAM" id="SSF52418">
    <property type="entry name" value="Nucleoside phosphorylase/phosphoribosyltransferase catalytic domain"/>
    <property type="match status" value="1"/>
</dbReference>
<dbReference type="SUPFAM" id="SSF47648">
    <property type="entry name" value="Nucleoside phosphorylase/phosphoribosyltransferase N-terminal domain"/>
    <property type="match status" value="1"/>
</dbReference>
<name>TRPD_THEFY</name>
<reference key="1">
    <citation type="journal article" date="2007" name="J. Bacteriol.">
        <title>Genome sequence and analysis of the soil cellulolytic actinomycete Thermobifida fusca YX.</title>
        <authorList>
            <person name="Lykidis A."/>
            <person name="Mavromatis K."/>
            <person name="Ivanova N."/>
            <person name="Anderson I."/>
            <person name="Land M."/>
            <person name="DiBartolo G."/>
            <person name="Martinez M."/>
            <person name="Lapidus A."/>
            <person name="Lucas S."/>
            <person name="Copeland A."/>
            <person name="Richardson P."/>
            <person name="Wilson D.B."/>
            <person name="Kyrpides N."/>
        </authorList>
    </citation>
    <scope>NUCLEOTIDE SEQUENCE [LARGE SCALE GENOMIC DNA]</scope>
    <source>
        <strain>YX</strain>
    </source>
</reference>
<proteinExistence type="inferred from homology"/>
<accession>Q47R55</accession>
<keyword id="KW-0028">Amino-acid biosynthesis</keyword>
<keyword id="KW-0057">Aromatic amino acid biosynthesis</keyword>
<keyword id="KW-0328">Glycosyltransferase</keyword>
<keyword id="KW-0460">Magnesium</keyword>
<keyword id="KW-0479">Metal-binding</keyword>
<keyword id="KW-0808">Transferase</keyword>
<keyword id="KW-0822">Tryptophan biosynthesis</keyword>
<feature type="chain" id="PRO_0000227195" description="Anthranilate phosphoribosyltransferase">
    <location>
        <begin position="1"/>
        <end position="348"/>
    </location>
</feature>
<feature type="binding site" evidence="1">
    <location>
        <position position="83"/>
    </location>
    <ligand>
        <name>5-phospho-alpha-D-ribose 1-diphosphate</name>
        <dbReference type="ChEBI" id="CHEBI:58017"/>
    </ligand>
</feature>
<feature type="binding site" evidence="1">
    <location>
        <position position="83"/>
    </location>
    <ligand>
        <name>anthranilate</name>
        <dbReference type="ChEBI" id="CHEBI:16567"/>
        <label>1</label>
    </ligand>
</feature>
<feature type="binding site" evidence="1">
    <location>
        <begin position="86"/>
        <end position="87"/>
    </location>
    <ligand>
        <name>5-phospho-alpha-D-ribose 1-diphosphate</name>
        <dbReference type="ChEBI" id="CHEBI:58017"/>
    </ligand>
</feature>
<feature type="binding site" evidence="1">
    <location>
        <position position="91"/>
    </location>
    <ligand>
        <name>5-phospho-alpha-D-ribose 1-diphosphate</name>
        <dbReference type="ChEBI" id="CHEBI:58017"/>
    </ligand>
</feature>
<feature type="binding site" evidence="1">
    <location>
        <begin position="93"/>
        <end position="96"/>
    </location>
    <ligand>
        <name>5-phospho-alpha-D-ribose 1-diphosphate</name>
        <dbReference type="ChEBI" id="CHEBI:58017"/>
    </ligand>
</feature>
<feature type="binding site" evidence="1">
    <location>
        <position position="95"/>
    </location>
    <ligand>
        <name>Mg(2+)</name>
        <dbReference type="ChEBI" id="CHEBI:18420"/>
        <label>1</label>
    </ligand>
</feature>
<feature type="binding site" evidence="1">
    <location>
        <begin position="111"/>
        <end position="119"/>
    </location>
    <ligand>
        <name>5-phospho-alpha-D-ribose 1-diphosphate</name>
        <dbReference type="ChEBI" id="CHEBI:58017"/>
    </ligand>
</feature>
<feature type="binding site" evidence="1">
    <location>
        <position position="114"/>
    </location>
    <ligand>
        <name>anthranilate</name>
        <dbReference type="ChEBI" id="CHEBI:16567"/>
        <label>1</label>
    </ligand>
</feature>
<feature type="binding site" evidence="1">
    <location>
        <position position="123"/>
    </location>
    <ligand>
        <name>5-phospho-alpha-D-ribose 1-diphosphate</name>
        <dbReference type="ChEBI" id="CHEBI:58017"/>
    </ligand>
</feature>
<feature type="binding site" evidence="1">
    <location>
        <position position="169"/>
    </location>
    <ligand>
        <name>anthranilate</name>
        <dbReference type="ChEBI" id="CHEBI:16567"/>
        <label>2</label>
    </ligand>
</feature>
<feature type="binding site" evidence="1">
    <location>
        <position position="227"/>
    </location>
    <ligand>
        <name>Mg(2+)</name>
        <dbReference type="ChEBI" id="CHEBI:18420"/>
        <label>2</label>
    </ligand>
</feature>
<feature type="binding site" evidence="1">
    <location>
        <position position="228"/>
    </location>
    <ligand>
        <name>Mg(2+)</name>
        <dbReference type="ChEBI" id="CHEBI:18420"/>
        <label>1</label>
    </ligand>
</feature>
<feature type="binding site" evidence="1">
    <location>
        <position position="228"/>
    </location>
    <ligand>
        <name>Mg(2+)</name>
        <dbReference type="ChEBI" id="CHEBI:18420"/>
        <label>2</label>
    </ligand>
</feature>
<gene>
    <name evidence="1" type="primary">trpD</name>
    <name type="ordered locus">Tfu_1024</name>
</gene>
<protein>
    <recommendedName>
        <fullName evidence="1">Anthranilate phosphoribosyltransferase</fullName>
        <ecNumber evidence="1">2.4.2.18</ecNumber>
    </recommendedName>
</protein>
<evidence type="ECO:0000255" key="1">
    <source>
        <dbReference type="HAMAP-Rule" id="MF_00211"/>
    </source>
</evidence>
<organism>
    <name type="scientific">Thermobifida fusca (strain YX)</name>
    <dbReference type="NCBI Taxonomy" id="269800"/>
    <lineage>
        <taxon>Bacteria</taxon>
        <taxon>Bacillati</taxon>
        <taxon>Actinomycetota</taxon>
        <taxon>Actinomycetes</taxon>
        <taxon>Streptosporangiales</taxon>
        <taxon>Nocardiopsidaceae</taxon>
        <taxon>Thermobifida</taxon>
    </lineage>
</organism>
<sequence length="348" mass="36357">MSERTWSHLISALLNGTSLTADDTKWAMNEIMSGSATDAQIAGFAIALRAKGESVAEVRGLAQGMLDHAVTISVPGATLDIVGTGGDRAHTVNVSTMASIVASAAGARVVKHGNRAASSSCGTADVLERLGVIIDLDPADAVAVAEEVDITFCFAPLYHPSLKYAAKPRRELAVPTVFNFLGPLTNPARPTASAIGVFDRNMCEIMAGVFAERGVNALVFRGDDGLDELTTTTTSSVWIVADGSVRYEQLDPADLGIPRATPEALRGGDVEFNARVVREFLDGRPGPVRDAVLLNAAAALAAAEGVTGSLIETLRAQYQRAAEAVDSGAAKAKLDAWVESSQARAKQL</sequence>